<dbReference type="EC" id="6.1.1.5" evidence="1"/>
<dbReference type="EMBL" id="CU928161">
    <property type="protein sequence ID" value="CAR01392.1"/>
    <property type="molecule type" value="Genomic_DNA"/>
</dbReference>
<dbReference type="RefSeq" id="WP_001286813.1">
    <property type="nucleotide sequence ID" value="NC_011742.1"/>
</dbReference>
<dbReference type="SMR" id="B7MAE6"/>
<dbReference type="KEGG" id="ecz:ECS88_0025"/>
<dbReference type="HOGENOM" id="CLU_001493_7_1_6"/>
<dbReference type="Proteomes" id="UP000000747">
    <property type="component" value="Chromosome"/>
</dbReference>
<dbReference type="GO" id="GO:0005829">
    <property type="term" value="C:cytosol"/>
    <property type="evidence" value="ECO:0007669"/>
    <property type="project" value="TreeGrafter"/>
</dbReference>
<dbReference type="GO" id="GO:0002161">
    <property type="term" value="F:aminoacyl-tRNA deacylase activity"/>
    <property type="evidence" value="ECO:0007669"/>
    <property type="project" value="InterPro"/>
</dbReference>
<dbReference type="GO" id="GO:0005524">
    <property type="term" value="F:ATP binding"/>
    <property type="evidence" value="ECO:0007669"/>
    <property type="project" value="UniProtKB-UniRule"/>
</dbReference>
<dbReference type="GO" id="GO:0004822">
    <property type="term" value="F:isoleucine-tRNA ligase activity"/>
    <property type="evidence" value="ECO:0007669"/>
    <property type="project" value="UniProtKB-UniRule"/>
</dbReference>
<dbReference type="GO" id="GO:0000049">
    <property type="term" value="F:tRNA binding"/>
    <property type="evidence" value="ECO:0007669"/>
    <property type="project" value="InterPro"/>
</dbReference>
<dbReference type="GO" id="GO:0008270">
    <property type="term" value="F:zinc ion binding"/>
    <property type="evidence" value="ECO:0007669"/>
    <property type="project" value="UniProtKB-UniRule"/>
</dbReference>
<dbReference type="GO" id="GO:0006428">
    <property type="term" value="P:isoleucyl-tRNA aminoacylation"/>
    <property type="evidence" value="ECO:0007669"/>
    <property type="project" value="UniProtKB-UniRule"/>
</dbReference>
<dbReference type="CDD" id="cd07960">
    <property type="entry name" value="Anticodon_Ia_Ile_BEm"/>
    <property type="match status" value="1"/>
</dbReference>
<dbReference type="CDD" id="cd00818">
    <property type="entry name" value="IleRS_core"/>
    <property type="match status" value="1"/>
</dbReference>
<dbReference type="FunFam" id="1.10.730.20:FF:000001">
    <property type="entry name" value="Isoleucine--tRNA ligase"/>
    <property type="match status" value="1"/>
</dbReference>
<dbReference type="FunFam" id="3.40.50.620:FF:000042">
    <property type="entry name" value="Isoleucine--tRNA ligase"/>
    <property type="match status" value="1"/>
</dbReference>
<dbReference type="FunFam" id="3.40.50.620:FF:000048">
    <property type="entry name" value="Isoleucine--tRNA ligase"/>
    <property type="match status" value="1"/>
</dbReference>
<dbReference type="FunFam" id="3.90.740.10:FF:000002">
    <property type="entry name" value="Isoleucine--tRNA ligase"/>
    <property type="match status" value="1"/>
</dbReference>
<dbReference type="Gene3D" id="1.10.730.20">
    <property type="match status" value="1"/>
</dbReference>
<dbReference type="Gene3D" id="3.40.50.620">
    <property type="entry name" value="HUPs"/>
    <property type="match status" value="2"/>
</dbReference>
<dbReference type="Gene3D" id="3.90.740.10">
    <property type="entry name" value="Valyl/Leucyl/Isoleucyl-tRNA synthetase, editing domain"/>
    <property type="match status" value="1"/>
</dbReference>
<dbReference type="HAMAP" id="MF_02002">
    <property type="entry name" value="Ile_tRNA_synth_type1"/>
    <property type="match status" value="1"/>
</dbReference>
<dbReference type="InterPro" id="IPR001412">
    <property type="entry name" value="aa-tRNA-synth_I_CS"/>
</dbReference>
<dbReference type="InterPro" id="IPR002300">
    <property type="entry name" value="aa-tRNA-synth_Ia"/>
</dbReference>
<dbReference type="InterPro" id="IPR033708">
    <property type="entry name" value="Anticodon_Ile_BEm"/>
</dbReference>
<dbReference type="InterPro" id="IPR002301">
    <property type="entry name" value="Ile-tRNA-ligase"/>
</dbReference>
<dbReference type="InterPro" id="IPR023585">
    <property type="entry name" value="Ile-tRNA-ligase_type1"/>
</dbReference>
<dbReference type="InterPro" id="IPR050081">
    <property type="entry name" value="Ile-tRNA_ligase"/>
</dbReference>
<dbReference type="InterPro" id="IPR013155">
    <property type="entry name" value="M/V/L/I-tRNA-synth_anticd-bd"/>
</dbReference>
<dbReference type="InterPro" id="IPR014729">
    <property type="entry name" value="Rossmann-like_a/b/a_fold"/>
</dbReference>
<dbReference type="InterPro" id="IPR009080">
    <property type="entry name" value="tRNAsynth_Ia_anticodon-bd"/>
</dbReference>
<dbReference type="InterPro" id="IPR009008">
    <property type="entry name" value="Val/Leu/Ile-tRNA-synth_edit"/>
</dbReference>
<dbReference type="InterPro" id="IPR010663">
    <property type="entry name" value="Znf_FPG/IleRS"/>
</dbReference>
<dbReference type="NCBIfam" id="TIGR00392">
    <property type="entry name" value="ileS"/>
    <property type="match status" value="1"/>
</dbReference>
<dbReference type="PANTHER" id="PTHR42765:SF1">
    <property type="entry name" value="ISOLEUCINE--TRNA LIGASE, MITOCHONDRIAL"/>
    <property type="match status" value="1"/>
</dbReference>
<dbReference type="PANTHER" id="PTHR42765">
    <property type="entry name" value="SOLEUCYL-TRNA SYNTHETASE"/>
    <property type="match status" value="1"/>
</dbReference>
<dbReference type="Pfam" id="PF08264">
    <property type="entry name" value="Anticodon_1"/>
    <property type="match status" value="1"/>
</dbReference>
<dbReference type="Pfam" id="PF00133">
    <property type="entry name" value="tRNA-synt_1"/>
    <property type="match status" value="1"/>
</dbReference>
<dbReference type="Pfam" id="PF06827">
    <property type="entry name" value="zf-FPG_IleRS"/>
    <property type="match status" value="1"/>
</dbReference>
<dbReference type="PRINTS" id="PR00984">
    <property type="entry name" value="TRNASYNTHILE"/>
</dbReference>
<dbReference type="SUPFAM" id="SSF47323">
    <property type="entry name" value="Anticodon-binding domain of a subclass of class I aminoacyl-tRNA synthetases"/>
    <property type="match status" value="1"/>
</dbReference>
<dbReference type="SUPFAM" id="SSF52374">
    <property type="entry name" value="Nucleotidylyl transferase"/>
    <property type="match status" value="1"/>
</dbReference>
<dbReference type="SUPFAM" id="SSF50677">
    <property type="entry name" value="ValRS/IleRS/LeuRS editing domain"/>
    <property type="match status" value="1"/>
</dbReference>
<dbReference type="PROSITE" id="PS00178">
    <property type="entry name" value="AA_TRNA_LIGASE_I"/>
    <property type="match status" value="1"/>
</dbReference>
<keyword id="KW-0007">Acetylation</keyword>
<keyword id="KW-0030">Aminoacyl-tRNA synthetase</keyword>
<keyword id="KW-0067">ATP-binding</keyword>
<keyword id="KW-0963">Cytoplasm</keyword>
<keyword id="KW-0436">Ligase</keyword>
<keyword id="KW-0479">Metal-binding</keyword>
<keyword id="KW-0547">Nucleotide-binding</keyword>
<keyword id="KW-0648">Protein biosynthesis</keyword>
<keyword id="KW-1185">Reference proteome</keyword>
<keyword id="KW-0862">Zinc</keyword>
<evidence type="ECO:0000255" key="1">
    <source>
        <dbReference type="HAMAP-Rule" id="MF_02002"/>
    </source>
</evidence>
<reference key="1">
    <citation type="journal article" date="2009" name="PLoS Genet.">
        <title>Organised genome dynamics in the Escherichia coli species results in highly diverse adaptive paths.</title>
        <authorList>
            <person name="Touchon M."/>
            <person name="Hoede C."/>
            <person name="Tenaillon O."/>
            <person name="Barbe V."/>
            <person name="Baeriswyl S."/>
            <person name="Bidet P."/>
            <person name="Bingen E."/>
            <person name="Bonacorsi S."/>
            <person name="Bouchier C."/>
            <person name="Bouvet O."/>
            <person name="Calteau A."/>
            <person name="Chiapello H."/>
            <person name="Clermont O."/>
            <person name="Cruveiller S."/>
            <person name="Danchin A."/>
            <person name="Diard M."/>
            <person name="Dossat C."/>
            <person name="Karoui M.E."/>
            <person name="Frapy E."/>
            <person name="Garry L."/>
            <person name="Ghigo J.M."/>
            <person name="Gilles A.M."/>
            <person name="Johnson J."/>
            <person name="Le Bouguenec C."/>
            <person name="Lescat M."/>
            <person name="Mangenot S."/>
            <person name="Martinez-Jehanne V."/>
            <person name="Matic I."/>
            <person name="Nassif X."/>
            <person name="Oztas S."/>
            <person name="Petit M.A."/>
            <person name="Pichon C."/>
            <person name="Rouy Z."/>
            <person name="Ruf C.S."/>
            <person name="Schneider D."/>
            <person name="Tourret J."/>
            <person name="Vacherie B."/>
            <person name="Vallenet D."/>
            <person name="Medigue C."/>
            <person name="Rocha E.P.C."/>
            <person name="Denamur E."/>
        </authorList>
    </citation>
    <scope>NUCLEOTIDE SEQUENCE [LARGE SCALE GENOMIC DNA]</scope>
    <source>
        <strain>S88 / ExPEC</strain>
    </source>
</reference>
<sequence>MSDYKSTLNLPETGFPMRGDLAKREPGMLARWTDDDLYGIIRAAKKGKKTFILHDGPPYANGSIHIGHSVNKILKDIIIKSKGLSGYDSPYVPGWDCHGLPIELKVEQEYGKPGEKFTAAEFRAKCREYAATQVDGQRKDFIRLGVLGDWSHPYLTMDFKTEANIIRALGKIIGNGHLHKGAKPVHWCVDCRSALAEAEVEYYDKTSPSIDVAFLAVDQDALKTKFGVSNVNGPISLVIWTTTPWTLPANRAISIAPDFDYALVQIDGQAVILAKDLVESVMQRIGVSDYTILGTVKGAELELLRFTHPFMDFDVPAILGDHVTLDAGTGAVHTAPGHGPDDYVIGQKYGLETANPVGPDGTYLPGTYPTLDGVNVFKANDIVIALLQEKGALLHVEKMQHSYPCCWRHKTPIIFRATPQWFVSMDQKGLRAQSLKEIKGVQWIPDWGQARIESMVANRPDWCISRQRTWGVPMSLFVHKDTEELHPRTLELMEEVAKRVEVDGIQAWWDLDAKEILGDEADQYVKVPDTLDVWFDSGSTHSSVVDVRPEFAGHAADMYLEGSDQHRGWFMSSLMISTAMKGKAPYRQVLTHGFTVDGQGRKMSKSIGNTVSPQDVMNKLGADILRLWVASTDYTGEMAVSDEILKRAADSYRRIRNTARFLLANLNGFDPAKDMVKPEEMVVLDRWAVGCAKAAQEDILKAYEAYDFHEVVQRLMRFCSVEMGSFYLDIIKDRQYTAKADSVARRSCQTALYHIAEALVRWMAPILSFTADEVWGYLPGEREKYVFTGEWYEGLFGLADSEAMNDAFWDELLKVRGEVNKVIEQARADKKVGGSLEAAVTLYAEPELAAKLTALGDELRFVLLTSGATVADYNDAPADAQQSEVLKGLKVALSKAEGEKCPRCWHYTQDVGKVAEHAEICGRCVSNVAGDGEKRKFA</sequence>
<gene>
    <name evidence="1" type="primary">ileS</name>
    <name type="ordered locus">ECS88_0025</name>
</gene>
<organism>
    <name type="scientific">Escherichia coli O45:K1 (strain S88 / ExPEC)</name>
    <dbReference type="NCBI Taxonomy" id="585035"/>
    <lineage>
        <taxon>Bacteria</taxon>
        <taxon>Pseudomonadati</taxon>
        <taxon>Pseudomonadota</taxon>
        <taxon>Gammaproteobacteria</taxon>
        <taxon>Enterobacterales</taxon>
        <taxon>Enterobacteriaceae</taxon>
        <taxon>Escherichia</taxon>
    </lineage>
</organism>
<accession>B7MAE6</accession>
<proteinExistence type="inferred from homology"/>
<name>SYI_ECO45</name>
<comment type="function">
    <text evidence="1">Catalyzes the attachment of isoleucine to tRNA(Ile). As IleRS can inadvertently accommodate and process structurally similar amino acids such as valine, to avoid such errors it has two additional distinct tRNA(Ile)-dependent editing activities. One activity is designated as 'pretransfer' editing and involves the hydrolysis of activated Val-AMP. The other activity is designated 'posttransfer' editing and involves deacylation of mischarged Val-tRNA(Ile).</text>
</comment>
<comment type="catalytic activity">
    <reaction evidence="1">
        <text>tRNA(Ile) + L-isoleucine + ATP = L-isoleucyl-tRNA(Ile) + AMP + diphosphate</text>
        <dbReference type="Rhea" id="RHEA:11060"/>
        <dbReference type="Rhea" id="RHEA-COMP:9666"/>
        <dbReference type="Rhea" id="RHEA-COMP:9695"/>
        <dbReference type="ChEBI" id="CHEBI:30616"/>
        <dbReference type="ChEBI" id="CHEBI:33019"/>
        <dbReference type="ChEBI" id="CHEBI:58045"/>
        <dbReference type="ChEBI" id="CHEBI:78442"/>
        <dbReference type="ChEBI" id="CHEBI:78528"/>
        <dbReference type="ChEBI" id="CHEBI:456215"/>
        <dbReference type="EC" id="6.1.1.5"/>
    </reaction>
</comment>
<comment type="cofactor">
    <cofactor evidence="1">
        <name>Zn(2+)</name>
        <dbReference type="ChEBI" id="CHEBI:29105"/>
    </cofactor>
    <text evidence="1">Binds 1 zinc ion per subunit.</text>
</comment>
<comment type="subunit">
    <text evidence="1">Monomer.</text>
</comment>
<comment type="subcellular location">
    <subcellularLocation>
        <location evidence="1">Cytoplasm</location>
    </subcellularLocation>
</comment>
<comment type="domain">
    <text evidence="1">IleRS has two distinct active sites: one for aminoacylation and one for editing. The misactivated valine is translocated from the active site to the editing site, which sterically excludes the correctly activated isoleucine. The single editing site contains two valyl binding pockets, one specific for each substrate (Val-AMP or Val-tRNA(Ile)).</text>
</comment>
<comment type="similarity">
    <text evidence="1">Belongs to the class-I aminoacyl-tRNA synthetase family. IleS type 1 subfamily.</text>
</comment>
<feature type="chain" id="PRO_1000189154" description="Isoleucine--tRNA ligase">
    <location>
        <begin position="1"/>
        <end position="938"/>
    </location>
</feature>
<feature type="short sequence motif" description="'HIGH' region">
    <location>
        <begin position="58"/>
        <end position="68"/>
    </location>
</feature>
<feature type="short sequence motif" description="'KMSKS' region">
    <location>
        <begin position="602"/>
        <end position="606"/>
    </location>
</feature>
<feature type="binding site" evidence="1">
    <location>
        <position position="561"/>
    </location>
    <ligand>
        <name>L-isoleucyl-5'-AMP</name>
        <dbReference type="ChEBI" id="CHEBI:178002"/>
    </ligand>
</feature>
<feature type="binding site" evidence="1">
    <location>
        <position position="605"/>
    </location>
    <ligand>
        <name>ATP</name>
        <dbReference type="ChEBI" id="CHEBI:30616"/>
    </ligand>
</feature>
<feature type="binding site" evidence="1">
    <location>
        <position position="901"/>
    </location>
    <ligand>
        <name>Zn(2+)</name>
        <dbReference type="ChEBI" id="CHEBI:29105"/>
    </ligand>
</feature>
<feature type="binding site" evidence="1">
    <location>
        <position position="904"/>
    </location>
    <ligand>
        <name>Zn(2+)</name>
        <dbReference type="ChEBI" id="CHEBI:29105"/>
    </ligand>
</feature>
<feature type="binding site" evidence="1">
    <location>
        <position position="921"/>
    </location>
    <ligand>
        <name>Zn(2+)</name>
        <dbReference type="ChEBI" id="CHEBI:29105"/>
    </ligand>
</feature>
<feature type="binding site" evidence="1">
    <location>
        <position position="924"/>
    </location>
    <ligand>
        <name>Zn(2+)</name>
        <dbReference type="ChEBI" id="CHEBI:29105"/>
    </ligand>
</feature>
<feature type="modified residue" description="N6-acetyllysine" evidence="1">
    <location>
        <position position="183"/>
    </location>
</feature>
<protein>
    <recommendedName>
        <fullName evidence="1">Isoleucine--tRNA ligase</fullName>
        <ecNumber evidence="1">6.1.1.5</ecNumber>
    </recommendedName>
    <alternativeName>
        <fullName evidence="1">Isoleucyl-tRNA synthetase</fullName>
        <shortName evidence="1">IleRS</shortName>
    </alternativeName>
</protein>